<protein>
    <recommendedName>
        <fullName evidence="1">ATP synthase gamma chain</fullName>
    </recommendedName>
    <alternativeName>
        <fullName evidence="1">ATP synthase F1 sector gamma subunit</fullName>
    </alternativeName>
    <alternativeName>
        <fullName evidence="1">F-ATPase gamma subunit</fullName>
    </alternativeName>
</protein>
<dbReference type="EMBL" id="CP001157">
    <property type="protein sequence ID" value="ACO81292.1"/>
    <property type="molecule type" value="Genomic_DNA"/>
</dbReference>
<dbReference type="RefSeq" id="WP_012703645.1">
    <property type="nucleotide sequence ID" value="NC_012560.1"/>
</dbReference>
<dbReference type="SMR" id="C1DND4"/>
<dbReference type="STRING" id="322710.Avin_52170"/>
<dbReference type="EnsemblBacteria" id="ACO81292">
    <property type="protein sequence ID" value="ACO81292"/>
    <property type="gene ID" value="Avin_52170"/>
</dbReference>
<dbReference type="GeneID" id="88188030"/>
<dbReference type="KEGG" id="avn:Avin_52170"/>
<dbReference type="eggNOG" id="COG0224">
    <property type="taxonomic scope" value="Bacteria"/>
</dbReference>
<dbReference type="HOGENOM" id="CLU_050669_0_1_6"/>
<dbReference type="OrthoDB" id="9812769at2"/>
<dbReference type="Proteomes" id="UP000002424">
    <property type="component" value="Chromosome"/>
</dbReference>
<dbReference type="GO" id="GO:0005886">
    <property type="term" value="C:plasma membrane"/>
    <property type="evidence" value="ECO:0007669"/>
    <property type="project" value="UniProtKB-SubCell"/>
</dbReference>
<dbReference type="GO" id="GO:0045259">
    <property type="term" value="C:proton-transporting ATP synthase complex"/>
    <property type="evidence" value="ECO:0007669"/>
    <property type="project" value="UniProtKB-KW"/>
</dbReference>
<dbReference type="GO" id="GO:0005524">
    <property type="term" value="F:ATP binding"/>
    <property type="evidence" value="ECO:0007669"/>
    <property type="project" value="UniProtKB-UniRule"/>
</dbReference>
<dbReference type="GO" id="GO:0046933">
    <property type="term" value="F:proton-transporting ATP synthase activity, rotational mechanism"/>
    <property type="evidence" value="ECO:0007669"/>
    <property type="project" value="UniProtKB-UniRule"/>
</dbReference>
<dbReference type="GO" id="GO:0042777">
    <property type="term" value="P:proton motive force-driven plasma membrane ATP synthesis"/>
    <property type="evidence" value="ECO:0007669"/>
    <property type="project" value="UniProtKB-UniRule"/>
</dbReference>
<dbReference type="CDD" id="cd12151">
    <property type="entry name" value="F1-ATPase_gamma"/>
    <property type="match status" value="1"/>
</dbReference>
<dbReference type="FunFam" id="1.10.287.80:FF:000005">
    <property type="entry name" value="ATP synthase gamma chain"/>
    <property type="match status" value="1"/>
</dbReference>
<dbReference type="FunFam" id="3.40.1380.10:FF:000001">
    <property type="entry name" value="ATP synthase gamma chain"/>
    <property type="match status" value="1"/>
</dbReference>
<dbReference type="Gene3D" id="3.40.1380.10">
    <property type="match status" value="1"/>
</dbReference>
<dbReference type="Gene3D" id="1.10.287.80">
    <property type="entry name" value="ATP synthase, gamma subunit, helix hairpin domain"/>
    <property type="match status" value="1"/>
</dbReference>
<dbReference type="HAMAP" id="MF_00815">
    <property type="entry name" value="ATP_synth_gamma_bact"/>
    <property type="match status" value="1"/>
</dbReference>
<dbReference type="InterPro" id="IPR035968">
    <property type="entry name" value="ATP_synth_F1_ATPase_gsu"/>
</dbReference>
<dbReference type="InterPro" id="IPR000131">
    <property type="entry name" value="ATP_synth_F1_gsu"/>
</dbReference>
<dbReference type="InterPro" id="IPR023632">
    <property type="entry name" value="ATP_synth_F1_gsu_CS"/>
</dbReference>
<dbReference type="NCBIfam" id="TIGR01146">
    <property type="entry name" value="ATPsyn_F1gamma"/>
    <property type="match status" value="1"/>
</dbReference>
<dbReference type="NCBIfam" id="NF004144">
    <property type="entry name" value="PRK05621.1-1"/>
    <property type="match status" value="1"/>
</dbReference>
<dbReference type="PANTHER" id="PTHR11693">
    <property type="entry name" value="ATP SYNTHASE GAMMA CHAIN"/>
    <property type="match status" value="1"/>
</dbReference>
<dbReference type="PANTHER" id="PTHR11693:SF22">
    <property type="entry name" value="ATP SYNTHASE SUBUNIT GAMMA, MITOCHONDRIAL"/>
    <property type="match status" value="1"/>
</dbReference>
<dbReference type="Pfam" id="PF00231">
    <property type="entry name" value="ATP-synt"/>
    <property type="match status" value="1"/>
</dbReference>
<dbReference type="PRINTS" id="PR00126">
    <property type="entry name" value="ATPASEGAMMA"/>
</dbReference>
<dbReference type="SUPFAM" id="SSF52943">
    <property type="entry name" value="ATP synthase (F1-ATPase), gamma subunit"/>
    <property type="match status" value="1"/>
</dbReference>
<dbReference type="PROSITE" id="PS00153">
    <property type="entry name" value="ATPASE_GAMMA"/>
    <property type="match status" value="1"/>
</dbReference>
<organism>
    <name type="scientific">Azotobacter vinelandii (strain DJ / ATCC BAA-1303)</name>
    <dbReference type="NCBI Taxonomy" id="322710"/>
    <lineage>
        <taxon>Bacteria</taxon>
        <taxon>Pseudomonadati</taxon>
        <taxon>Pseudomonadota</taxon>
        <taxon>Gammaproteobacteria</taxon>
        <taxon>Pseudomonadales</taxon>
        <taxon>Pseudomonadaceae</taxon>
        <taxon>Azotobacter</taxon>
    </lineage>
</organism>
<gene>
    <name evidence="1" type="primary">atpG</name>
    <name type="ordered locus">Avin_52170</name>
</gene>
<name>ATPG_AZOVD</name>
<sequence>MAGAKEIRSKIASIKSTQKITSAMEKVAVSKMRKAQLRMAASRPYAERIRQVIGHLAKANPEYKHPFMVERPVKRVGYILVSTDRGLCGGLNINLFKALIKSMKEWHDKGVEADFCVIGNKGASFFRSYGGNVVAAIGNLGEEPSINSLIGSIKVMLDAFHEGRVDRLYLASNKFINTMTQKPVVEQLLPLAASDDEGVQKGTWDYLYEPNAQQLLDALLVRYMESQVYQAVVENGAAEQAARMIAMKNATDNAGELISDLQLVYNKARQAAITQEISEIVGGAAAV</sequence>
<proteinExistence type="inferred from homology"/>
<reference key="1">
    <citation type="journal article" date="2009" name="J. Bacteriol.">
        <title>Genome sequence of Azotobacter vinelandii, an obligate aerobe specialized to support diverse anaerobic metabolic processes.</title>
        <authorList>
            <person name="Setubal J.C."/>
            <person name="Dos Santos P."/>
            <person name="Goldman B.S."/>
            <person name="Ertesvaag H."/>
            <person name="Espin G."/>
            <person name="Rubio L.M."/>
            <person name="Valla S."/>
            <person name="Almeida N.F."/>
            <person name="Balasubramanian D."/>
            <person name="Cromes L."/>
            <person name="Curatti L."/>
            <person name="Du Z."/>
            <person name="Godsy E."/>
            <person name="Goodner B."/>
            <person name="Hellner-Burris K."/>
            <person name="Hernandez J.A."/>
            <person name="Houmiel K."/>
            <person name="Imperial J."/>
            <person name="Kennedy C."/>
            <person name="Larson T.J."/>
            <person name="Latreille P."/>
            <person name="Ligon L.S."/>
            <person name="Lu J."/>
            <person name="Maerk M."/>
            <person name="Miller N.M."/>
            <person name="Norton S."/>
            <person name="O'Carroll I.P."/>
            <person name="Paulsen I."/>
            <person name="Raulfs E.C."/>
            <person name="Roemer R."/>
            <person name="Rosser J."/>
            <person name="Segura D."/>
            <person name="Slater S."/>
            <person name="Stricklin S.L."/>
            <person name="Studholme D.J."/>
            <person name="Sun J."/>
            <person name="Viana C.J."/>
            <person name="Wallin E."/>
            <person name="Wang B."/>
            <person name="Wheeler C."/>
            <person name="Zhu H."/>
            <person name="Dean D.R."/>
            <person name="Dixon R."/>
            <person name="Wood D."/>
        </authorList>
    </citation>
    <scope>NUCLEOTIDE SEQUENCE [LARGE SCALE GENOMIC DNA]</scope>
    <source>
        <strain>DJ / ATCC BAA-1303</strain>
    </source>
</reference>
<feature type="chain" id="PRO_1000213026" description="ATP synthase gamma chain">
    <location>
        <begin position="1"/>
        <end position="287"/>
    </location>
</feature>
<keyword id="KW-0066">ATP synthesis</keyword>
<keyword id="KW-0997">Cell inner membrane</keyword>
<keyword id="KW-1003">Cell membrane</keyword>
<keyword id="KW-0139">CF(1)</keyword>
<keyword id="KW-0375">Hydrogen ion transport</keyword>
<keyword id="KW-0406">Ion transport</keyword>
<keyword id="KW-0472">Membrane</keyword>
<keyword id="KW-0813">Transport</keyword>
<comment type="function">
    <text evidence="1">Produces ATP from ADP in the presence of a proton gradient across the membrane. The gamma chain is believed to be important in regulating ATPase activity and the flow of protons through the CF(0) complex.</text>
</comment>
<comment type="subunit">
    <text evidence="1">F-type ATPases have 2 components, CF(1) - the catalytic core - and CF(0) - the membrane proton channel. CF(1) has five subunits: alpha(3), beta(3), gamma(1), delta(1), epsilon(1). CF(0) has three main subunits: a, b and c.</text>
</comment>
<comment type="subcellular location">
    <subcellularLocation>
        <location evidence="1">Cell inner membrane</location>
        <topology evidence="1">Peripheral membrane protein</topology>
    </subcellularLocation>
</comment>
<comment type="similarity">
    <text evidence="1">Belongs to the ATPase gamma chain family.</text>
</comment>
<accession>C1DND4</accession>
<evidence type="ECO:0000255" key="1">
    <source>
        <dbReference type="HAMAP-Rule" id="MF_00815"/>
    </source>
</evidence>